<evidence type="ECO:0000250" key="1"/>
<evidence type="ECO:0000255" key="2">
    <source>
        <dbReference type="HAMAP-Rule" id="MF_01352"/>
    </source>
</evidence>
<sequence length="115" mass="13093">MANTILKSTTRHIRIFTARVENNDLIADTSQLTLDIDPDNEFLWEQSTIEKIQSRFKELVECHTGADLTDYTLRRIGTELEGTLFSLLQAGELSYNPNARVLNYSMGLPRTTELS</sequence>
<name>NDHM_PAUCH</name>
<keyword id="KW-0472">Membrane</keyword>
<keyword id="KW-0520">NAD</keyword>
<keyword id="KW-0521">NADP</keyword>
<keyword id="KW-0994">Organellar chromatophore</keyword>
<keyword id="KW-0934">Plastid</keyword>
<keyword id="KW-0618">Plastoquinone</keyword>
<keyword id="KW-0874">Quinone</keyword>
<keyword id="KW-0793">Thylakoid</keyword>
<keyword id="KW-1278">Translocase</keyword>
<dbReference type="EC" id="7.1.1.-" evidence="2"/>
<dbReference type="EMBL" id="CP000815">
    <property type="protein sequence ID" value="ACB42756.1"/>
    <property type="molecule type" value="Genomic_DNA"/>
</dbReference>
<dbReference type="RefSeq" id="YP_002048966.1">
    <property type="nucleotide sequence ID" value="NC_011087.1"/>
</dbReference>
<dbReference type="SMR" id="B1X487"/>
<dbReference type="GeneID" id="6481846"/>
<dbReference type="GO" id="GO:0070118">
    <property type="term" value="C:organellar chromatophore thylakoid membrane"/>
    <property type="evidence" value="ECO:0007669"/>
    <property type="project" value="UniProtKB-SubCell"/>
</dbReference>
<dbReference type="GO" id="GO:0009536">
    <property type="term" value="C:plastid"/>
    <property type="evidence" value="ECO:0007669"/>
    <property type="project" value="UniProtKB-KW"/>
</dbReference>
<dbReference type="GO" id="GO:0016655">
    <property type="term" value="F:oxidoreductase activity, acting on NAD(P)H, quinone or similar compound as acceptor"/>
    <property type="evidence" value="ECO:0007669"/>
    <property type="project" value="UniProtKB-UniRule"/>
</dbReference>
<dbReference type="GO" id="GO:0048038">
    <property type="term" value="F:quinone binding"/>
    <property type="evidence" value="ECO:0007669"/>
    <property type="project" value="UniProtKB-KW"/>
</dbReference>
<dbReference type="HAMAP" id="MF_01352">
    <property type="entry name" value="NDH1_NDH1M"/>
    <property type="match status" value="1"/>
</dbReference>
<dbReference type="InterPro" id="IPR018922">
    <property type="entry name" value="NdhM"/>
</dbReference>
<dbReference type="PANTHER" id="PTHR36900">
    <property type="entry name" value="NAD(P)H-QUINONE OXIDOREDUCTASE SUBUNIT M, CHLOROPLASTIC"/>
    <property type="match status" value="1"/>
</dbReference>
<dbReference type="PANTHER" id="PTHR36900:SF1">
    <property type="entry name" value="NAD(P)H-QUINONE OXIDOREDUCTASE SUBUNIT M, CHLOROPLASTIC"/>
    <property type="match status" value="1"/>
</dbReference>
<dbReference type="Pfam" id="PF10664">
    <property type="entry name" value="NdhM"/>
    <property type="match status" value="1"/>
</dbReference>
<accession>B1X487</accession>
<proteinExistence type="inferred from homology"/>
<gene>
    <name evidence="2" type="primary">ndhM</name>
    <name type="ORF">PCC_0315</name>
</gene>
<reference key="1">
    <citation type="journal article" date="2008" name="Curr. Biol.">
        <title>Chromatophore genome sequence of Paulinella sheds light on acquisition of photosynthesis by eukaryotes.</title>
        <authorList>
            <person name="Nowack E.C.M."/>
            <person name="Melkonian M."/>
            <person name="Gloeckner G."/>
        </authorList>
    </citation>
    <scope>NUCLEOTIDE SEQUENCE [LARGE SCALE GENOMIC DNA]</scope>
</reference>
<comment type="function">
    <text evidence="1">NDH-1 shuttles electrons from an unknown electron donor, via FMN and iron-sulfur (Fe-S) centers, to quinones in the respiratory and/or the photosynthetic chain. The immediate electron acceptor for the enzyme in this species is believed to be plastoquinone. Couples the redox reaction to proton translocation, and thus conserves the redox energy in a proton gradient (By similarity).</text>
</comment>
<comment type="catalytic activity">
    <reaction evidence="2">
        <text>a plastoquinone + NADH + (n+1) H(+)(in) = a plastoquinol + NAD(+) + n H(+)(out)</text>
        <dbReference type="Rhea" id="RHEA:42608"/>
        <dbReference type="Rhea" id="RHEA-COMP:9561"/>
        <dbReference type="Rhea" id="RHEA-COMP:9562"/>
        <dbReference type="ChEBI" id="CHEBI:15378"/>
        <dbReference type="ChEBI" id="CHEBI:17757"/>
        <dbReference type="ChEBI" id="CHEBI:57540"/>
        <dbReference type="ChEBI" id="CHEBI:57945"/>
        <dbReference type="ChEBI" id="CHEBI:62192"/>
    </reaction>
</comment>
<comment type="catalytic activity">
    <reaction evidence="2">
        <text>a plastoquinone + NADPH + (n+1) H(+)(in) = a plastoquinol + NADP(+) + n H(+)(out)</text>
        <dbReference type="Rhea" id="RHEA:42612"/>
        <dbReference type="Rhea" id="RHEA-COMP:9561"/>
        <dbReference type="Rhea" id="RHEA-COMP:9562"/>
        <dbReference type="ChEBI" id="CHEBI:15378"/>
        <dbReference type="ChEBI" id="CHEBI:17757"/>
        <dbReference type="ChEBI" id="CHEBI:57783"/>
        <dbReference type="ChEBI" id="CHEBI:58349"/>
        <dbReference type="ChEBI" id="CHEBI:62192"/>
    </reaction>
</comment>
<comment type="subunit">
    <text evidence="2">NDH-1 can be composed of about 15 different subunits; different subcomplexes with different compositions have been identified which probably have different functions.</text>
</comment>
<comment type="subcellular location">
    <subcellularLocation>
        <location evidence="1">Plastid</location>
        <location evidence="1">Organellar chromatophore thylakoid membrane</location>
        <topology evidence="2">Peripheral membrane protein</topology>
        <orientation evidence="2">Cytoplasmic side</orientation>
    </subcellularLocation>
</comment>
<comment type="similarity">
    <text evidence="2">Belongs to the complex I NdhM subunit family.</text>
</comment>
<protein>
    <recommendedName>
        <fullName evidence="2">NAD(P)H-quinone oxidoreductase subunit M, organellar chromatophore</fullName>
        <ecNumber evidence="2">7.1.1.-</ecNumber>
    </recommendedName>
    <alternativeName>
        <fullName evidence="2">NAD(P)H dehydrogenase I subunit M</fullName>
        <shortName evidence="2">NDH-1 subunit M</shortName>
        <shortName evidence="2">NDH-M</shortName>
    </alternativeName>
</protein>
<geneLocation type="organellar chromatophore"/>
<feature type="chain" id="PRO_0000352211" description="NAD(P)H-quinone oxidoreductase subunit M, organellar chromatophore">
    <location>
        <begin position="1"/>
        <end position="115"/>
    </location>
</feature>
<organism>
    <name type="scientific">Paulinella chromatophora</name>
    <dbReference type="NCBI Taxonomy" id="39717"/>
    <lineage>
        <taxon>Eukaryota</taxon>
        <taxon>Sar</taxon>
        <taxon>Rhizaria</taxon>
        <taxon>Cercozoa</taxon>
        <taxon>Imbricatea</taxon>
        <taxon>Silicofilosea</taxon>
        <taxon>Euglyphida</taxon>
        <taxon>Paulinellidae</taxon>
        <taxon>Paulinella</taxon>
    </lineage>
</organism>